<comment type="subunit">
    <text evidence="1">Forms oligomers.</text>
</comment>
<comment type="subcellular location">
    <subcellularLocation>
        <location evidence="1">Cytoplasm</location>
        <location evidence="1">Nucleoid</location>
    </subcellularLocation>
</comment>
<comment type="similarity">
    <text evidence="1">Belongs to the MraZ family.</text>
</comment>
<feature type="chain" id="PRO_0000230096" description="Transcriptional regulator MraZ">
    <location>
        <begin position="1"/>
        <end position="155"/>
    </location>
</feature>
<feature type="domain" description="SpoVT-AbrB 1" evidence="2">
    <location>
        <begin position="5"/>
        <end position="52"/>
    </location>
</feature>
<feature type="domain" description="SpoVT-AbrB 2" evidence="2">
    <location>
        <begin position="81"/>
        <end position="124"/>
    </location>
</feature>
<dbReference type="EMBL" id="CP000084">
    <property type="protein sequence ID" value="AAZ20858.1"/>
    <property type="molecule type" value="Genomic_DNA"/>
</dbReference>
<dbReference type="RefSeq" id="WP_006997875.1">
    <property type="nucleotide sequence ID" value="NC_007205.1"/>
</dbReference>
<dbReference type="SMR" id="Q4FPN3"/>
<dbReference type="STRING" id="335992.SAR11_0033"/>
<dbReference type="GeneID" id="66294536"/>
<dbReference type="KEGG" id="pub:SAR11_0033"/>
<dbReference type="eggNOG" id="COG2001">
    <property type="taxonomic scope" value="Bacteria"/>
</dbReference>
<dbReference type="HOGENOM" id="CLU_107907_1_0_5"/>
<dbReference type="OrthoDB" id="9807753at2"/>
<dbReference type="Proteomes" id="UP000002528">
    <property type="component" value="Chromosome"/>
</dbReference>
<dbReference type="GO" id="GO:0005737">
    <property type="term" value="C:cytoplasm"/>
    <property type="evidence" value="ECO:0007669"/>
    <property type="project" value="UniProtKB-UniRule"/>
</dbReference>
<dbReference type="GO" id="GO:0009295">
    <property type="term" value="C:nucleoid"/>
    <property type="evidence" value="ECO:0007669"/>
    <property type="project" value="UniProtKB-SubCell"/>
</dbReference>
<dbReference type="GO" id="GO:0003700">
    <property type="term" value="F:DNA-binding transcription factor activity"/>
    <property type="evidence" value="ECO:0007669"/>
    <property type="project" value="UniProtKB-UniRule"/>
</dbReference>
<dbReference type="GO" id="GO:0000976">
    <property type="term" value="F:transcription cis-regulatory region binding"/>
    <property type="evidence" value="ECO:0007669"/>
    <property type="project" value="TreeGrafter"/>
</dbReference>
<dbReference type="GO" id="GO:2000143">
    <property type="term" value="P:negative regulation of DNA-templated transcription initiation"/>
    <property type="evidence" value="ECO:0007669"/>
    <property type="project" value="TreeGrafter"/>
</dbReference>
<dbReference type="CDD" id="cd16321">
    <property type="entry name" value="MraZ_C"/>
    <property type="match status" value="1"/>
</dbReference>
<dbReference type="CDD" id="cd16320">
    <property type="entry name" value="MraZ_N"/>
    <property type="match status" value="1"/>
</dbReference>
<dbReference type="Gene3D" id="3.40.1550.20">
    <property type="entry name" value="Transcriptional regulator MraZ domain"/>
    <property type="match status" value="1"/>
</dbReference>
<dbReference type="HAMAP" id="MF_01008">
    <property type="entry name" value="MraZ"/>
    <property type="match status" value="1"/>
</dbReference>
<dbReference type="InterPro" id="IPR003444">
    <property type="entry name" value="MraZ"/>
</dbReference>
<dbReference type="InterPro" id="IPR035644">
    <property type="entry name" value="MraZ_C"/>
</dbReference>
<dbReference type="InterPro" id="IPR020603">
    <property type="entry name" value="MraZ_dom"/>
</dbReference>
<dbReference type="InterPro" id="IPR035642">
    <property type="entry name" value="MraZ_N"/>
</dbReference>
<dbReference type="InterPro" id="IPR038619">
    <property type="entry name" value="MraZ_sf"/>
</dbReference>
<dbReference type="InterPro" id="IPR007159">
    <property type="entry name" value="SpoVT-AbrB_dom"/>
</dbReference>
<dbReference type="InterPro" id="IPR037914">
    <property type="entry name" value="SpoVT-AbrB_sf"/>
</dbReference>
<dbReference type="NCBIfam" id="NF001477">
    <property type="entry name" value="PRK00326.2-4"/>
    <property type="match status" value="1"/>
</dbReference>
<dbReference type="PANTHER" id="PTHR34701">
    <property type="entry name" value="TRANSCRIPTIONAL REGULATOR MRAZ"/>
    <property type="match status" value="1"/>
</dbReference>
<dbReference type="PANTHER" id="PTHR34701:SF1">
    <property type="entry name" value="TRANSCRIPTIONAL REGULATOR MRAZ"/>
    <property type="match status" value="1"/>
</dbReference>
<dbReference type="Pfam" id="PF02381">
    <property type="entry name" value="MraZ"/>
    <property type="match status" value="2"/>
</dbReference>
<dbReference type="SUPFAM" id="SSF89447">
    <property type="entry name" value="AbrB/MazE/MraZ-like"/>
    <property type="match status" value="1"/>
</dbReference>
<dbReference type="PROSITE" id="PS51740">
    <property type="entry name" value="SPOVT_ABRB"/>
    <property type="match status" value="2"/>
</dbReference>
<protein>
    <recommendedName>
        <fullName>Transcriptional regulator MraZ</fullName>
    </recommendedName>
</protein>
<keyword id="KW-0963">Cytoplasm</keyword>
<keyword id="KW-0238">DNA-binding</keyword>
<keyword id="KW-1185">Reference proteome</keyword>
<keyword id="KW-0677">Repeat</keyword>
<keyword id="KW-0804">Transcription</keyword>
<keyword id="KW-0805">Transcription regulation</keyword>
<sequence length="155" mass="17709">MFLSTYENKIDKKGRVSVPASFRSHLSNLGYNGVICYPSFNNQSIEACSQDRIEKLSASIDSLSPFEEKRDYFATSILSESMNLQFDSEGRISLSTKLLKHAKIKNSMLFVGQGQTFQIWEPAAFEKFKINARKKANLNRASLKWEKHFNNNEGK</sequence>
<name>MRAZ_PELUB</name>
<organism>
    <name type="scientific">Pelagibacter ubique (strain HTCC1062)</name>
    <dbReference type="NCBI Taxonomy" id="335992"/>
    <lineage>
        <taxon>Bacteria</taxon>
        <taxon>Pseudomonadati</taxon>
        <taxon>Pseudomonadota</taxon>
        <taxon>Alphaproteobacteria</taxon>
        <taxon>Candidatus Pelagibacterales</taxon>
        <taxon>Candidatus Pelagibacteraceae</taxon>
        <taxon>Candidatus Pelagibacter</taxon>
    </lineage>
</organism>
<evidence type="ECO:0000255" key="1">
    <source>
        <dbReference type="HAMAP-Rule" id="MF_01008"/>
    </source>
</evidence>
<evidence type="ECO:0000255" key="2">
    <source>
        <dbReference type="PROSITE-ProRule" id="PRU01076"/>
    </source>
</evidence>
<reference key="1">
    <citation type="journal article" date="2005" name="Science">
        <title>Genome streamlining in a cosmopolitan oceanic bacterium.</title>
        <authorList>
            <person name="Giovannoni S.J."/>
            <person name="Tripp H.J."/>
            <person name="Givan S."/>
            <person name="Podar M."/>
            <person name="Vergin K.L."/>
            <person name="Baptista D."/>
            <person name="Bibbs L."/>
            <person name="Eads J."/>
            <person name="Richardson T.H."/>
            <person name="Noordewier M."/>
            <person name="Rappe M.S."/>
            <person name="Short J.M."/>
            <person name="Carrington J.C."/>
            <person name="Mathur E.J."/>
        </authorList>
    </citation>
    <scope>NUCLEOTIDE SEQUENCE [LARGE SCALE GENOMIC DNA]</scope>
    <source>
        <strain>HTCC1062</strain>
    </source>
</reference>
<proteinExistence type="inferred from homology"/>
<gene>
    <name evidence="1" type="primary">mraZ</name>
    <name type="ordered locus">SAR11_0033</name>
</gene>
<accession>Q4FPN3</accession>